<reference key="1">
    <citation type="journal article" date="2009" name="BMC Genomics">
        <title>Pseudogene accumulation in the evolutionary histories of Salmonella enterica serovars Paratyphi A and Typhi.</title>
        <authorList>
            <person name="Holt K.E."/>
            <person name="Thomson N.R."/>
            <person name="Wain J."/>
            <person name="Langridge G.C."/>
            <person name="Hasan R."/>
            <person name="Bhutta Z.A."/>
            <person name="Quail M.A."/>
            <person name="Norbertczak H."/>
            <person name="Walker D."/>
            <person name="Simmonds M."/>
            <person name="White B."/>
            <person name="Bason N."/>
            <person name="Mungall K."/>
            <person name="Dougan G."/>
            <person name="Parkhill J."/>
        </authorList>
    </citation>
    <scope>NUCLEOTIDE SEQUENCE [LARGE SCALE GENOMIC DNA]</scope>
    <source>
        <strain>AKU_12601</strain>
    </source>
</reference>
<keyword id="KW-0687">Ribonucleoprotein</keyword>
<keyword id="KW-0689">Ribosomal protein</keyword>
<dbReference type="EMBL" id="FM200053">
    <property type="protein sequence ID" value="CAR61609.1"/>
    <property type="molecule type" value="Genomic_DNA"/>
</dbReference>
<dbReference type="RefSeq" id="WP_001519051.1">
    <property type="nucleotide sequence ID" value="NC_011147.1"/>
</dbReference>
<dbReference type="SMR" id="B5BI11"/>
<dbReference type="KEGG" id="sek:SSPA3343"/>
<dbReference type="HOGENOM" id="CLU_064548_3_1_6"/>
<dbReference type="Proteomes" id="UP000001869">
    <property type="component" value="Chromosome"/>
</dbReference>
<dbReference type="GO" id="GO:0022625">
    <property type="term" value="C:cytosolic large ribosomal subunit"/>
    <property type="evidence" value="ECO:0007669"/>
    <property type="project" value="TreeGrafter"/>
</dbReference>
<dbReference type="GO" id="GO:0003735">
    <property type="term" value="F:structural constituent of ribosome"/>
    <property type="evidence" value="ECO:0007669"/>
    <property type="project" value="InterPro"/>
</dbReference>
<dbReference type="GO" id="GO:0006412">
    <property type="term" value="P:translation"/>
    <property type="evidence" value="ECO:0007669"/>
    <property type="project" value="UniProtKB-UniRule"/>
</dbReference>
<dbReference type="FunFam" id="2.30.170.40:FF:000001">
    <property type="entry name" value="50S ribosomal protein L28"/>
    <property type="match status" value="1"/>
</dbReference>
<dbReference type="Gene3D" id="2.30.170.40">
    <property type="entry name" value="Ribosomal protein L28/L24"/>
    <property type="match status" value="1"/>
</dbReference>
<dbReference type="HAMAP" id="MF_00373">
    <property type="entry name" value="Ribosomal_bL28"/>
    <property type="match status" value="1"/>
</dbReference>
<dbReference type="InterPro" id="IPR026569">
    <property type="entry name" value="Ribosomal_bL28"/>
</dbReference>
<dbReference type="InterPro" id="IPR034704">
    <property type="entry name" value="Ribosomal_bL28/bL31-like_sf"/>
</dbReference>
<dbReference type="InterPro" id="IPR001383">
    <property type="entry name" value="Ribosomal_bL28_bact-type"/>
</dbReference>
<dbReference type="InterPro" id="IPR037147">
    <property type="entry name" value="Ribosomal_bL28_sf"/>
</dbReference>
<dbReference type="NCBIfam" id="TIGR00009">
    <property type="entry name" value="L28"/>
    <property type="match status" value="1"/>
</dbReference>
<dbReference type="PANTHER" id="PTHR13528">
    <property type="entry name" value="39S RIBOSOMAL PROTEIN L28, MITOCHONDRIAL"/>
    <property type="match status" value="1"/>
</dbReference>
<dbReference type="PANTHER" id="PTHR13528:SF2">
    <property type="entry name" value="LARGE RIBOSOMAL SUBUNIT PROTEIN BL28M"/>
    <property type="match status" value="1"/>
</dbReference>
<dbReference type="Pfam" id="PF00830">
    <property type="entry name" value="Ribosomal_L28"/>
    <property type="match status" value="1"/>
</dbReference>
<dbReference type="SUPFAM" id="SSF143800">
    <property type="entry name" value="L28p-like"/>
    <property type="match status" value="1"/>
</dbReference>
<name>RL28_SALPK</name>
<organism>
    <name type="scientific">Salmonella paratyphi A (strain AKU_12601)</name>
    <dbReference type="NCBI Taxonomy" id="554290"/>
    <lineage>
        <taxon>Bacteria</taxon>
        <taxon>Pseudomonadati</taxon>
        <taxon>Pseudomonadota</taxon>
        <taxon>Gammaproteobacteria</taxon>
        <taxon>Enterobacterales</taxon>
        <taxon>Enterobacteriaceae</taxon>
        <taxon>Salmonella</taxon>
    </lineage>
</organism>
<accession>B5BI11</accession>
<sequence length="78" mass="9051">MSRVCQVTGKRPVTGNNRSHALNATKRRFLPNLHSHRFWVESEKRFVTLRVSAKGMRIIDKKGIETVLSELRARGEKY</sequence>
<feature type="chain" id="PRO_1000121686" description="Large ribosomal subunit protein bL28">
    <location>
        <begin position="1"/>
        <end position="78"/>
    </location>
</feature>
<protein>
    <recommendedName>
        <fullName evidence="1">Large ribosomal subunit protein bL28</fullName>
    </recommendedName>
    <alternativeName>
        <fullName evidence="2">50S ribosomal protein L28</fullName>
    </alternativeName>
</protein>
<gene>
    <name evidence="1" type="primary">rpmB</name>
    <name type="ordered locus">SSPA3343</name>
</gene>
<evidence type="ECO:0000255" key="1">
    <source>
        <dbReference type="HAMAP-Rule" id="MF_00373"/>
    </source>
</evidence>
<evidence type="ECO:0000305" key="2"/>
<proteinExistence type="inferred from homology"/>
<comment type="similarity">
    <text evidence="1">Belongs to the bacterial ribosomal protein bL28 family.</text>
</comment>